<gene>
    <name type="primary">csd</name>
    <name type="ordered locus">TC_0059</name>
</gene>
<sequence length="400" mass="43584">MYNVKEDFPIFRNQKDPYIYLDSAATTHKPQCVIDAVTDYYSFSYATVNRAIYSASHDISSAYWRVRSKVAAWIGARYDQEIVFTRGTTSSLNLLAIAANDSWLAGGTVVVSEAEHHANILSWEIACRRSGATVKKVRVNDEGIIDLSHLEKLLKQGVQLVSLAHVSNVSGAVLPVQEVAFLVHRYGALLAIDGAQGVGSGPLNLSGWDVDFYAFSGHKLYAPTGIGVLYGKRELLESLPPVEGGGDMVVVYDSESSRYQEPPLRFEAGTPHIAGVLGLGAAIDYLQALPFSVSDHLTALTRFLYNRLLTIPDIQIVGPQQGTPRGCLCSIIIPGVQASDLGFLLDGKGIAVRSGHQCSQPAMARWDLGHVLRASLGVYNDQQDVISFVEALEDILRSYR</sequence>
<name>CSD_CHLMU</name>
<evidence type="ECO:0000250" key="1"/>
<evidence type="ECO:0000305" key="2"/>
<comment type="function">
    <text evidence="1">Catalyzes the removal of elemental sulfur and selenium atoms from L-cysteine, L-cystine, L-selenocysteine, and L-selenocystine to produce L-alanine.</text>
</comment>
<comment type="catalytic activity">
    <reaction>
        <text>(sulfur carrier)-H + L-cysteine = (sulfur carrier)-SH + L-alanine</text>
        <dbReference type="Rhea" id="RHEA:43892"/>
        <dbReference type="Rhea" id="RHEA-COMP:14737"/>
        <dbReference type="Rhea" id="RHEA-COMP:14739"/>
        <dbReference type="ChEBI" id="CHEBI:29917"/>
        <dbReference type="ChEBI" id="CHEBI:35235"/>
        <dbReference type="ChEBI" id="CHEBI:57972"/>
        <dbReference type="ChEBI" id="CHEBI:64428"/>
        <dbReference type="EC" id="2.8.1.7"/>
    </reaction>
</comment>
<comment type="cofactor">
    <cofactor evidence="1">
        <name>pyridoxal 5'-phosphate</name>
        <dbReference type="ChEBI" id="CHEBI:597326"/>
    </cofactor>
</comment>
<comment type="similarity">
    <text evidence="2">Belongs to the class-V pyridoxal-phosphate-dependent aminotransferase family. Csd subfamily.</text>
</comment>
<dbReference type="EC" id="2.8.1.7"/>
<dbReference type="EMBL" id="AE002160">
    <property type="protein sequence ID" value="AAF73526.1"/>
    <property type="molecule type" value="Genomic_DNA"/>
</dbReference>
<dbReference type="RefSeq" id="WP_010229248.1">
    <property type="nucleotide sequence ID" value="NZ_CP063055.1"/>
</dbReference>
<dbReference type="SMR" id="Q9PLP0"/>
<dbReference type="GeneID" id="1245588"/>
<dbReference type="KEGG" id="cmu:TC_0059"/>
<dbReference type="eggNOG" id="COG0520">
    <property type="taxonomic scope" value="Bacteria"/>
</dbReference>
<dbReference type="HOGENOM" id="CLU_003433_2_5_0"/>
<dbReference type="OrthoDB" id="9808002at2"/>
<dbReference type="Proteomes" id="UP000000800">
    <property type="component" value="Chromosome"/>
</dbReference>
<dbReference type="GO" id="GO:0031071">
    <property type="term" value="F:cysteine desulfurase activity"/>
    <property type="evidence" value="ECO:0007669"/>
    <property type="project" value="UniProtKB-EC"/>
</dbReference>
<dbReference type="GO" id="GO:0030170">
    <property type="term" value="F:pyridoxal phosphate binding"/>
    <property type="evidence" value="ECO:0007669"/>
    <property type="project" value="InterPro"/>
</dbReference>
<dbReference type="GO" id="GO:0006534">
    <property type="term" value="P:cysteine metabolic process"/>
    <property type="evidence" value="ECO:0007669"/>
    <property type="project" value="InterPro"/>
</dbReference>
<dbReference type="CDD" id="cd06453">
    <property type="entry name" value="SufS_like"/>
    <property type="match status" value="1"/>
</dbReference>
<dbReference type="Gene3D" id="3.90.1150.10">
    <property type="entry name" value="Aspartate Aminotransferase, domain 1"/>
    <property type="match status" value="1"/>
</dbReference>
<dbReference type="Gene3D" id="3.40.640.10">
    <property type="entry name" value="Type I PLP-dependent aspartate aminotransferase-like (Major domain)"/>
    <property type="match status" value="1"/>
</dbReference>
<dbReference type="InterPro" id="IPR000192">
    <property type="entry name" value="Aminotrans_V_dom"/>
</dbReference>
<dbReference type="InterPro" id="IPR020578">
    <property type="entry name" value="Aminotrans_V_PyrdxlP_BS"/>
</dbReference>
<dbReference type="InterPro" id="IPR010970">
    <property type="entry name" value="Cys_dSase_SufS"/>
</dbReference>
<dbReference type="InterPro" id="IPR016454">
    <property type="entry name" value="Cysteine_dSase"/>
</dbReference>
<dbReference type="InterPro" id="IPR015424">
    <property type="entry name" value="PyrdxlP-dep_Trfase"/>
</dbReference>
<dbReference type="InterPro" id="IPR015421">
    <property type="entry name" value="PyrdxlP-dep_Trfase_major"/>
</dbReference>
<dbReference type="InterPro" id="IPR015422">
    <property type="entry name" value="PyrdxlP-dep_Trfase_small"/>
</dbReference>
<dbReference type="NCBIfam" id="TIGR01979">
    <property type="entry name" value="sufS"/>
    <property type="match status" value="1"/>
</dbReference>
<dbReference type="PANTHER" id="PTHR43586">
    <property type="entry name" value="CYSTEINE DESULFURASE"/>
    <property type="match status" value="1"/>
</dbReference>
<dbReference type="PANTHER" id="PTHR43586:SF8">
    <property type="entry name" value="CYSTEINE DESULFURASE 1, CHLOROPLASTIC"/>
    <property type="match status" value="1"/>
</dbReference>
<dbReference type="Pfam" id="PF00266">
    <property type="entry name" value="Aminotran_5"/>
    <property type="match status" value="1"/>
</dbReference>
<dbReference type="PIRSF" id="PIRSF005572">
    <property type="entry name" value="NifS"/>
    <property type="match status" value="1"/>
</dbReference>
<dbReference type="SUPFAM" id="SSF53383">
    <property type="entry name" value="PLP-dependent transferases"/>
    <property type="match status" value="1"/>
</dbReference>
<dbReference type="PROSITE" id="PS00595">
    <property type="entry name" value="AA_TRANSFER_CLASS_5"/>
    <property type="match status" value="1"/>
</dbReference>
<protein>
    <recommendedName>
        <fullName>Probable cysteine desulfurase</fullName>
        <ecNumber>2.8.1.7</ecNumber>
    </recommendedName>
</protein>
<proteinExistence type="inferred from homology"/>
<reference key="1">
    <citation type="journal article" date="2000" name="Nucleic Acids Res.">
        <title>Genome sequences of Chlamydia trachomatis MoPn and Chlamydia pneumoniae AR39.</title>
        <authorList>
            <person name="Read T.D."/>
            <person name="Brunham R.C."/>
            <person name="Shen C."/>
            <person name="Gill S.R."/>
            <person name="Heidelberg J.F."/>
            <person name="White O."/>
            <person name="Hickey E.K."/>
            <person name="Peterson J.D."/>
            <person name="Utterback T.R."/>
            <person name="Berry K.J."/>
            <person name="Bass S."/>
            <person name="Linher K.D."/>
            <person name="Weidman J.F."/>
            <person name="Khouri H.M."/>
            <person name="Craven B."/>
            <person name="Bowman C."/>
            <person name="Dodson R.J."/>
            <person name="Gwinn M.L."/>
            <person name="Nelson W.C."/>
            <person name="DeBoy R.T."/>
            <person name="Kolonay J.F."/>
            <person name="McClarty G."/>
            <person name="Salzberg S.L."/>
            <person name="Eisen J.A."/>
            <person name="Fraser C.M."/>
        </authorList>
    </citation>
    <scope>NUCLEOTIDE SEQUENCE [LARGE SCALE GENOMIC DNA]</scope>
    <source>
        <strain>MoPn / Nigg</strain>
    </source>
</reference>
<accession>Q9PLP0</accession>
<keyword id="KW-0663">Pyridoxal phosphate</keyword>
<keyword id="KW-0808">Transferase</keyword>
<feature type="chain" id="PRO_0000150295" description="Probable cysteine desulfurase">
    <location>
        <begin position="1"/>
        <end position="400"/>
    </location>
</feature>
<feature type="active site" description="Cysteine persulfide intermediate" evidence="1">
    <location>
        <position position="358"/>
    </location>
</feature>
<feature type="modified residue" description="N6-(pyridoxal phosphate)lysine" evidence="1">
    <location>
        <position position="219"/>
    </location>
</feature>
<organism>
    <name type="scientific">Chlamydia muridarum (strain MoPn / Nigg)</name>
    <dbReference type="NCBI Taxonomy" id="243161"/>
    <lineage>
        <taxon>Bacteria</taxon>
        <taxon>Pseudomonadati</taxon>
        <taxon>Chlamydiota</taxon>
        <taxon>Chlamydiia</taxon>
        <taxon>Chlamydiales</taxon>
        <taxon>Chlamydiaceae</taxon>
        <taxon>Chlamydia/Chlamydophila group</taxon>
        <taxon>Chlamydia</taxon>
    </lineage>
</organism>